<accession>Q864I6</accession>
<evidence type="ECO:0000250" key="1">
    <source>
        <dbReference type="UniProtKB" id="Q01726"/>
    </source>
</evidence>
<evidence type="ECO:0000255" key="2"/>
<evidence type="ECO:0000255" key="3">
    <source>
        <dbReference type="PROSITE-ProRule" id="PRU00521"/>
    </source>
</evidence>
<protein>
    <recommendedName>
        <fullName>Melanocyte-stimulating hormone receptor</fullName>
        <shortName>MSH-R</shortName>
    </recommendedName>
    <alternativeName>
        <fullName>Melanocortin receptor 1</fullName>
        <shortName>MC1-R</shortName>
    </alternativeName>
</protein>
<gene>
    <name type="primary">MC1R</name>
</gene>
<keyword id="KW-1003">Cell membrane</keyword>
<keyword id="KW-0297">G-protein coupled receptor</keyword>
<keyword id="KW-0325">Glycoprotein</keyword>
<keyword id="KW-0449">Lipoprotein</keyword>
<keyword id="KW-0472">Membrane</keyword>
<keyword id="KW-0564">Palmitate</keyword>
<keyword id="KW-0675">Receptor</keyword>
<keyword id="KW-0807">Transducer</keyword>
<keyword id="KW-0812">Transmembrane</keyword>
<keyword id="KW-1133">Transmembrane helix</keyword>
<name>MSHR_TRACR</name>
<reference key="1">
    <citation type="journal article" date="2003" name="Am. J. Phys. Anthropol.">
        <title>Evolution of a pigmentation gene, the melanocortin-1 receptor, in primates.</title>
        <authorList>
            <person name="Mundy N.I."/>
            <person name="Kelly J."/>
        </authorList>
    </citation>
    <scope>NUCLEOTIDE SEQUENCE [GENOMIC DNA]</scope>
    <source>
        <strain>Isolate 1</strain>
    </source>
</reference>
<feature type="chain" id="PRO_0000069853" description="Melanocyte-stimulating hormone receptor">
    <location>
        <begin position="1"/>
        <end position="317"/>
    </location>
</feature>
<feature type="topological domain" description="Extracellular" evidence="2">
    <location>
        <begin position="1"/>
        <end position="37"/>
    </location>
</feature>
<feature type="transmembrane region" description="Helical; Name=1" evidence="2">
    <location>
        <begin position="38"/>
        <end position="63"/>
    </location>
</feature>
<feature type="topological domain" description="Cytoplasmic" evidence="2">
    <location>
        <begin position="64"/>
        <end position="72"/>
    </location>
</feature>
<feature type="transmembrane region" description="Helical; Name=2" evidence="2">
    <location>
        <begin position="73"/>
        <end position="93"/>
    </location>
</feature>
<feature type="topological domain" description="Extracellular" evidence="2">
    <location>
        <begin position="94"/>
        <end position="118"/>
    </location>
</feature>
<feature type="transmembrane region" description="Helical; Name=3" evidence="2">
    <location>
        <begin position="119"/>
        <end position="140"/>
    </location>
</feature>
<feature type="topological domain" description="Cytoplasmic" evidence="2">
    <location>
        <begin position="141"/>
        <end position="163"/>
    </location>
</feature>
<feature type="transmembrane region" description="Helical; Name=4" evidence="2">
    <location>
        <begin position="164"/>
        <end position="183"/>
    </location>
</feature>
<feature type="topological domain" description="Extracellular" evidence="2">
    <location>
        <begin position="184"/>
        <end position="191"/>
    </location>
</feature>
<feature type="transmembrane region" description="Helical; Name=5" evidence="2">
    <location>
        <begin position="192"/>
        <end position="211"/>
    </location>
</feature>
<feature type="topological domain" description="Cytoplasmic" evidence="2">
    <location>
        <begin position="212"/>
        <end position="240"/>
    </location>
</feature>
<feature type="transmembrane region" description="Helical; Name=6" evidence="2">
    <location>
        <begin position="241"/>
        <end position="266"/>
    </location>
</feature>
<feature type="topological domain" description="Extracellular" evidence="2">
    <location>
        <begin position="267"/>
        <end position="279"/>
    </location>
</feature>
<feature type="transmembrane region" description="Helical; Name=7" evidence="2">
    <location>
        <begin position="280"/>
        <end position="300"/>
    </location>
</feature>
<feature type="topological domain" description="Cytoplasmic" evidence="2">
    <location>
        <begin position="301"/>
        <end position="317"/>
    </location>
</feature>
<feature type="lipid moiety-binding region" description="S-palmitoyl cysteine" evidence="2">
    <location>
        <position position="315"/>
    </location>
</feature>
<feature type="glycosylation site" description="N-linked (GlcNAc...) asparagine" evidence="2">
    <location>
        <position position="29"/>
    </location>
</feature>
<sequence length="317" mass="34756">MPVQGSQRRLLGSLNSTPTATPRLGLAANQTGARCLEVSIPDGLFLSLGLVSLVENVLVVVAIARNRNLHSPMYCFICCLALSDLLVSGSNMLETAVILLLEAGALAARAAVVQQLDNVIDVITCSSMLSSLCFLGAIAVDRYISIFYALRYHSIVTLRRARRVVAAIWVASVLFSTLFIAYCDHAAVLLSLVVFFLAMLVLMAVLYVHMLARACQHAQGIAQLHKRQRPAHQGVGLKGAATLTILLGIFFLCWGPFFLHLTLIVLCPQHPTCSCIFKNFNLFLTLIICNAIIDPLIYAFRSQELRRTLKKVLLCSW</sequence>
<comment type="function">
    <text evidence="1">Receptor for MSH (alpha, beta and gamma) and ACTH. The activity of this receptor is mediated by G proteins which activate adenylate cyclase. Mediates melanogenesis, the production of eumelanin (black/brown) and phaeomelanin (red/yellow), via regulation of cAMP signaling in melanocytes.</text>
</comment>
<comment type="subunit">
    <text evidence="1">Interacts with MGRN1, but does not undergo MGRN1-mediated ubiquitination; this interaction competes with GNAS-binding and thus inhibits agonist-induced cAMP production. Interacts with OPN3; the interaction results in a decrease in MC1R-mediated cAMP signaling and ultimately a decrease in melanin production in melanocytes.</text>
</comment>
<comment type="subcellular location">
    <subcellularLocation>
        <location evidence="1">Cell membrane</location>
        <topology evidence="2">Multi-pass membrane protein</topology>
    </subcellularLocation>
</comment>
<comment type="similarity">
    <text evidence="3">Belongs to the G-protein coupled receptor 1 family.</text>
</comment>
<organism>
    <name type="scientific">Trachypithecus cristatus</name>
    <name type="common">Silvered leaf-monkey</name>
    <name type="synonym">Presbytis cristata</name>
    <dbReference type="NCBI Taxonomy" id="122765"/>
    <lineage>
        <taxon>Eukaryota</taxon>
        <taxon>Metazoa</taxon>
        <taxon>Chordata</taxon>
        <taxon>Craniata</taxon>
        <taxon>Vertebrata</taxon>
        <taxon>Euteleostomi</taxon>
        <taxon>Mammalia</taxon>
        <taxon>Eutheria</taxon>
        <taxon>Euarchontoglires</taxon>
        <taxon>Primates</taxon>
        <taxon>Haplorrhini</taxon>
        <taxon>Catarrhini</taxon>
        <taxon>Cercopithecidae</taxon>
        <taxon>Colobinae</taxon>
        <taxon>Trachypithecus</taxon>
    </lineage>
</organism>
<proteinExistence type="inferred from homology"/>
<dbReference type="EMBL" id="AY205111">
    <property type="protein sequence ID" value="AAP30985.1"/>
    <property type="molecule type" value="Genomic_DNA"/>
</dbReference>
<dbReference type="SMR" id="Q864I6"/>
<dbReference type="GlyCosmos" id="Q864I6">
    <property type="glycosylation" value="1 site, No reported glycans"/>
</dbReference>
<dbReference type="GO" id="GO:0005886">
    <property type="term" value="C:plasma membrane"/>
    <property type="evidence" value="ECO:0000250"/>
    <property type="project" value="UniProtKB"/>
</dbReference>
<dbReference type="GO" id="GO:0004980">
    <property type="term" value="F:melanocyte-stimulating hormone receptor activity"/>
    <property type="evidence" value="ECO:0007669"/>
    <property type="project" value="InterPro"/>
</dbReference>
<dbReference type="GO" id="GO:0007189">
    <property type="term" value="P:adenylate cyclase-activating G protein-coupled receptor signaling pathway"/>
    <property type="evidence" value="ECO:0007669"/>
    <property type="project" value="UniProtKB-ARBA"/>
</dbReference>
<dbReference type="FunFam" id="1.20.1070.10:FF:000211">
    <property type="entry name" value="Melanocyte-stimulating hormone receptor"/>
    <property type="match status" value="1"/>
</dbReference>
<dbReference type="Gene3D" id="1.20.1070.10">
    <property type="entry name" value="Rhodopsin 7-helix transmembrane proteins"/>
    <property type="match status" value="1"/>
</dbReference>
<dbReference type="InterPro" id="IPR000276">
    <property type="entry name" value="GPCR_Rhodpsn"/>
</dbReference>
<dbReference type="InterPro" id="IPR017452">
    <property type="entry name" value="GPCR_Rhodpsn_7TM"/>
</dbReference>
<dbReference type="InterPro" id="IPR001671">
    <property type="entry name" value="Melcrt_ACTH_rcpt"/>
</dbReference>
<dbReference type="InterPro" id="IPR000761">
    <property type="entry name" value="MSH_rcpt"/>
</dbReference>
<dbReference type="PANTHER" id="PTHR22750">
    <property type="entry name" value="G-PROTEIN COUPLED RECEPTOR"/>
    <property type="match status" value="1"/>
</dbReference>
<dbReference type="Pfam" id="PF00001">
    <property type="entry name" value="7tm_1"/>
    <property type="match status" value="1"/>
</dbReference>
<dbReference type="PRINTS" id="PR00237">
    <property type="entry name" value="GPCRRHODOPSN"/>
</dbReference>
<dbReference type="PRINTS" id="PR00534">
    <property type="entry name" value="MCRFAMILY"/>
</dbReference>
<dbReference type="PRINTS" id="PR00536">
    <property type="entry name" value="MELNOCYTESHR"/>
</dbReference>
<dbReference type="SMART" id="SM01381">
    <property type="entry name" value="7TM_GPCR_Srsx"/>
    <property type="match status" value="1"/>
</dbReference>
<dbReference type="SUPFAM" id="SSF81321">
    <property type="entry name" value="Family A G protein-coupled receptor-like"/>
    <property type="match status" value="1"/>
</dbReference>
<dbReference type="PROSITE" id="PS00237">
    <property type="entry name" value="G_PROTEIN_RECEP_F1_1"/>
    <property type="match status" value="1"/>
</dbReference>
<dbReference type="PROSITE" id="PS50262">
    <property type="entry name" value="G_PROTEIN_RECEP_F1_2"/>
    <property type="match status" value="1"/>
</dbReference>